<accession>A0MD34</accession>
<reference key="1">
    <citation type="journal article" date="2006" name="Adv. Exp. Med. Biol.">
        <title>Construction of a full-length cDNA infectious clone of a European-like Type 1 PRRSV isolated in the U.S.</title>
        <authorList>
            <person name="Fang Y."/>
            <person name="Faaberg K.S."/>
            <person name="Rowland R.R."/>
            <person name="Christopher-Hennings J."/>
            <person name="Pattnaik A.K."/>
            <person name="Osorio F."/>
            <person name="Nelson E.A."/>
        </authorList>
    </citation>
    <scope>NUCLEOTIDE SEQUENCE [GENOMIC RNA]</scope>
    <source>
        <strain>Infectious clone SD 01-08</strain>
    </source>
</reference>
<reference key="2">
    <citation type="journal article" date="2010" name="J. Virol.">
        <title>The minor envelope glycoproteins GP2a and GP4 of porcine reproductive and respiratory syndrome virus interact with the receptor CD163.</title>
        <authorList>
            <person name="Das P.B."/>
            <person name="Dinh P.X."/>
            <person name="Ansari I.H."/>
            <person name="de Lima M."/>
            <person name="Osorio F.A."/>
            <person name="Pattnaik A.K."/>
        </authorList>
    </citation>
    <scope>FUNCTION</scope>
    <scope>INTERACTION WITH GLYCOPROTEIN 4</scope>
    <source>
        <strain>FL-12</strain>
    </source>
</reference>
<sequence length="201" mass="22258">MKCSHKLGHSLTPHSCFWWLFLLCTGLSWSFADGNGNNSTYQYIYNLTICELNGTNWLSGHFEWAVETFVLYPVVTHILSLGFLTTSHFFDALGLGAVSTAGFVGGRYVLSSVYGACAFAAFVCFVIRAAKNCMACRYARTRFTNFIVDDRGGVHRWKSPIVVEKLGKAEIGGNLVTIKHVVLEGVKAQPLTRTSAEQWEA</sequence>
<proteinExistence type="evidence at protein level"/>
<feature type="signal peptide" evidence="2">
    <location>
        <begin position="1"/>
        <end position="32"/>
    </location>
</feature>
<feature type="chain" id="PRO_0000410887" description="Glycoprotein 5">
    <location>
        <begin position="33"/>
        <end position="201"/>
    </location>
</feature>
<feature type="topological domain" description="Virion surface" evidence="2">
    <location>
        <begin position="33"/>
        <end position="63"/>
    </location>
</feature>
<feature type="transmembrane region" description="Helical" evidence="2">
    <location>
        <begin position="64"/>
        <end position="84"/>
    </location>
</feature>
<feature type="transmembrane region" description="Helical" evidence="2">
    <location>
        <begin position="109"/>
        <end position="129"/>
    </location>
</feature>
<feature type="glycosylation site" description="N-linked (GlcNAc...) asparagine; by host" evidence="2">
    <location>
        <position position="37"/>
    </location>
</feature>
<feature type="glycosylation site" description="N-linked (GlcNAc...) asparagine; by host" evidence="2">
    <location>
        <position position="38"/>
    </location>
</feature>
<feature type="glycosylation site" description="N-linked (GlcNAc...) asparagine; by host" evidence="2">
    <location>
        <position position="46"/>
    </location>
</feature>
<feature type="glycosylation site" description="N-linked (GlcNAc...) asparagine; by host" evidence="2">
    <location>
        <position position="53"/>
    </location>
</feature>
<feature type="disulfide bond" description="Interchain (with C-8 in membrane protein)" evidence="1">
    <location>
        <position position="24"/>
    </location>
</feature>
<protein>
    <recommendedName>
        <fullName>Glycoprotein 5</fullName>
        <shortName>Protein GP5</shortName>
    </recommendedName>
    <alternativeName>
        <fullName>G(L)</fullName>
    </alternativeName>
</protein>
<organism>
    <name type="scientific">Porcine reproductive and respiratory syndrome virus (isolate Pig/United States/SD 01-08/2001)</name>
    <name type="common">PRRSV</name>
    <dbReference type="NCBI Taxonomy" id="857306"/>
    <lineage>
        <taxon>Viruses</taxon>
        <taxon>Riboviria</taxon>
        <taxon>Orthornavirae</taxon>
        <taxon>Pisuviricota</taxon>
        <taxon>Pisoniviricetes</taxon>
        <taxon>Nidovirales</taxon>
        <taxon>Arnidovirineae</taxon>
        <taxon>Arteriviridae</taxon>
        <taxon>Variarterivirinae</taxon>
        <taxon>Betaarterivirus</taxon>
        <taxon>Ampobartevirus</taxon>
        <taxon>Betaarterivirus americense</taxon>
    </lineage>
</organism>
<evidence type="ECO:0000250" key="1"/>
<evidence type="ECO:0000255" key="2"/>
<evidence type="ECO:0000269" key="3">
    <source>
    </source>
</evidence>
<evidence type="ECO:0000305" key="4"/>
<name>GP5_PRRSS</name>
<gene>
    <name type="primary">GP5</name>
    <name type="ORF">5</name>
</gene>
<organismHost>
    <name type="scientific">Sus scrofa</name>
    <name type="common">Pig</name>
    <dbReference type="NCBI Taxonomy" id="9823"/>
</organismHost>
<comment type="function">
    <text evidence="3">Major envelope protein present in abundant amounts in the virion envelope. Mediates virion sialic acid-dependent attachment the sialoadhesin receptor SIGLEC1. This attachment induces virion internalization into alveolar macrophages predominantly through clathrin-dependent endocytosis.</text>
</comment>
<comment type="subunit">
    <text evidence="1 3">Heterodimer with the membrane protein; disulfide-linked. This heterodimerization is required for transport to the Golgi complex (By similarity). Interacts with host SIGLEC1; this interaction plays a role in virus entry into host cell (By similarity). Interacts with glycoprotein 4.</text>
</comment>
<comment type="subcellular location">
    <subcellularLocation>
        <location evidence="4">Virion membrane</location>
        <topology evidence="4">Multi-pass membrane protein</topology>
    </subcellularLocation>
</comment>
<comment type="PTM">
    <text evidence="4">N-glycosylated.</text>
</comment>
<comment type="similarity">
    <text evidence="4">Belongs to the arteriviridae GP5 protein family.</text>
</comment>
<dbReference type="EMBL" id="DQ489311">
    <property type="protein sequence ID" value="ABF66346.1"/>
    <property type="molecule type" value="Genomic_RNA"/>
</dbReference>
<dbReference type="GlyCosmos" id="A0MD34">
    <property type="glycosylation" value="4 sites, No reported glycans"/>
</dbReference>
<dbReference type="Proteomes" id="UP000000937">
    <property type="component" value="Genome"/>
</dbReference>
<dbReference type="GO" id="GO:0016020">
    <property type="term" value="C:membrane"/>
    <property type="evidence" value="ECO:0007669"/>
    <property type="project" value="UniProtKB-KW"/>
</dbReference>
<dbReference type="GO" id="GO:0019031">
    <property type="term" value="C:viral envelope"/>
    <property type="evidence" value="ECO:0007669"/>
    <property type="project" value="UniProtKB-KW"/>
</dbReference>
<dbReference type="GO" id="GO:0055036">
    <property type="term" value="C:virion membrane"/>
    <property type="evidence" value="ECO:0007669"/>
    <property type="project" value="UniProtKB-SubCell"/>
</dbReference>
<dbReference type="GO" id="GO:0075512">
    <property type="term" value="P:clathrin-dependent endocytosis of virus by host cell"/>
    <property type="evidence" value="ECO:0007669"/>
    <property type="project" value="UniProtKB-KW"/>
</dbReference>
<dbReference type="GO" id="GO:0019062">
    <property type="term" value="P:virion attachment to host cell"/>
    <property type="evidence" value="ECO:0007669"/>
    <property type="project" value="UniProtKB-KW"/>
</dbReference>
<dbReference type="InterPro" id="IPR001332">
    <property type="entry name" value="Arteri_GP5"/>
</dbReference>
<dbReference type="Pfam" id="PF00951">
    <property type="entry name" value="Arteri_Gl"/>
    <property type="match status" value="1"/>
</dbReference>
<keyword id="KW-1165">Clathrin-mediated endocytosis of virus by host</keyword>
<keyword id="KW-1015">Disulfide bond</keyword>
<keyword id="KW-0325">Glycoprotein</keyword>
<keyword id="KW-0945">Host-virus interaction</keyword>
<keyword id="KW-0472">Membrane</keyword>
<keyword id="KW-0732">Signal</keyword>
<keyword id="KW-0812">Transmembrane</keyword>
<keyword id="KW-1133">Transmembrane helix</keyword>
<keyword id="KW-1161">Viral attachment to host cell</keyword>
<keyword id="KW-0261">Viral envelope protein</keyword>
<keyword id="KW-1162">Viral penetration into host cytoplasm</keyword>
<keyword id="KW-0946">Virion</keyword>
<keyword id="KW-1164">Virus endocytosis by host</keyword>
<keyword id="KW-1160">Virus entry into host cell</keyword>